<name>GPMA_AZOC5</name>
<protein>
    <recommendedName>
        <fullName evidence="1">2,3-bisphosphoglycerate-dependent phosphoglycerate mutase</fullName>
        <shortName evidence="1">BPG-dependent PGAM</shortName>
        <shortName evidence="1">PGAM</shortName>
        <shortName evidence="1">Phosphoglyceromutase</shortName>
        <shortName evidence="1">dPGM</shortName>
        <ecNumber evidence="1">5.4.2.11</ecNumber>
    </recommendedName>
</protein>
<reference key="1">
    <citation type="submission" date="2007-04" db="EMBL/GenBank/DDBJ databases">
        <title>Complete genome sequence of the nitrogen-fixing bacterium Azorhizobium caulinodans ORS571.</title>
        <authorList>
            <person name="Lee K.B."/>
            <person name="Backer P.D."/>
            <person name="Aono T."/>
            <person name="Liu C.T."/>
            <person name="Suzuki S."/>
            <person name="Suzuki T."/>
            <person name="Kaneko T."/>
            <person name="Yamada M."/>
            <person name="Tabata S."/>
            <person name="Kupfer D.M."/>
            <person name="Najar F.Z."/>
            <person name="Wiley G.B."/>
            <person name="Roe B."/>
            <person name="Binnewies T."/>
            <person name="Ussery D."/>
            <person name="Vereecke D."/>
            <person name="Gevers D."/>
            <person name="Holsters M."/>
            <person name="Oyaizu H."/>
        </authorList>
    </citation>
    <scope>NUCLEOTIDE SEQUENCE [LARGE SCALE GENOMIC DNA]</scope>
    <source>
        <strain>ATCC 43989 / DSM 5975 / JCM 20966 / LMG 6465 / NBRC 14845 / NCIMB 13405 / ORS 571</strain>
    </source>
</reference>
<sequence>MDRLLVLVRHGQSEWNLKNLFTGWRDPNLTDQGVSEARRAGALLAAEGLSFDVAYTSALTRAQRTCQLVLEEMGLTGLRTIADQALNERDYGDLSGLNKDDARAKFGEEQVHVWRRSYDISPPGGESLRDTVARVLPYFVQEILPSVLRGERTLVAAHGNSLRALVMVLERLSPEGIMKRELATGAPILYRLGADATVSEKRDILI</sequence>
<keyword id="KW-0312">Gluconeogenesis</keyword>
<keyword id="KW-0324">Glycolysis</keyword>
<keyword id="KW-0413">Isomerase</keyword>
<keyword id="KW-1185">Reference proteome</keyword>
<evidence type="ECO:0000255" key="1">
    <source>
        <dbReference type="HAMAP-Rule" id="MF_01039"/>
    </source>
</evidence>
<comment type="function">
    <text evidence="1">Catalyzes the interconversion of 2-phosphoglycerate and 3-phosphoglycerate.</text>
</comment>
<comment type="catalytic activity">
    <reaction evidence="1">
        <text>(2R)-2-phosphoglycerate = (2R)-3-phosphoglycerate</text>
        <dbReference type="Rhea" id="RHEA:15901"/>
        <dbReference type="ChEBI" id="CHEBI:58272"/>
        <dbReference type="ChEBI" id="CHEBI:58289"/>
        <dbReference type="EC" id="5.4.2.11"/>
    </reaction>
</comment>
<comment type="pathway">
    <text evidence="1">Carbohydrate degradation; glycolysis; pyruvate from D-glyceraldehyde 3-phosphate: step 3/5.</text>
</comment>
<comment type="subunit">
    <text evidence="1">Homodimer.</text>
</comment>
<comment type="similarity">
    <text evidence="1">Belongs to the phosphoglycerate mutase family. BPG-dependent PGAM subfamily.</text>
</comment>
<proteinExistence type="inferred from homology"/>
<accession>A8IGZ9</accession>
<organism>
    <name type="scientific">Azorhizobium caulinodans (strain ATCC 43989 / DSM 5975 / JCM 20966 / LMG 6465 / NBRC 14845 / NCIMB 13405 / ORS 571)</name>
    <dbReference type="NCBI Taxonomy" id="438753"/>
    <lineage>
        <taxon>Bacteria</taxon>
        <taxon>Pseudomonadati</taxon>
        <taxon>Pseudomonadota</taxon>
        <taxon>Alphaproteobacteria</taxon>
        <taxon>Hyphomicrobiales</taxon>
        <taxon>Xanthobacteraceae</taxon>
        <taxon>Azorhizobium</taxon>
    </lineage>
</organism>
<gene>
    <name evidence="1" type="primary">gpmA</name>
    <name type="ordered locus">AZC_0156</name>
</gene>
<dbReference type="EC" id="5.4.2.11" evidence="1"/>
<dbReference type="EMBL" id="AP009384">
    <property type="protein sequence ID" value="BAF86154.1"/>
    <property type="molecule type" value="Genomic_DNA"/>
</dbReference>
<dbReference type="RefSeq" id="WP_012168687.1">
    <property type="nucleotide sequence ID" value="NC_009937.1"/>
</dbReference>
<dbReference type="SMR" id="A8IGZ9"/>
<dbReference type="STRING" id="438753.AZC_0156"/>
<dbReference type="KEGG" id="azc:AZC_0156"/>
<dbReference type="eggNOG" id="COG0588">
    <property type="taxonomic scope" value="Bacteria"/>
</dbReference>
<dbReference type="HOGENOM" id="CLU_033323_1_4_5"/>
<dbReference type="UniPathway" id="UPA00109">
    <property type="reaction ID" value="UER00186"/>
</dbReference>
<dbReference type="Proteomes" id="UP000000270">
    <property type="component" value="Chromosome"/>
</dbReference>
<dbReference type="GO" id="GO:0004619">
    <property type="term" value="F:phosphoglycerate mutase activity"/>
    <property type="evidence" value="ECO:0007669"/>
    <property type="project" value="UniProtKB-EC"/>
</dbReference>
<dbReference type="GO" id="GO:0006094">
    <property type="term" value="P:gluconeogenesis"/>
    <property type="evidence" value="ECO:0007669"/>
    <property type="project" value="UniProtKB-UniRule"/>
</dbReference>
<dbReference type="GO" id="GO:0006096">
    <property type="term" value="P:glycolytic process"/>
    <property type="evidence" value="ECO:0007669"/>
    <property type="project" value="UniProtKB-UniRule"/>
</dbReference>
<dbReference type="CDD" id="cd07067">
    <property type="entry name" value="HP_PGM_like"/>
    <property type="match status" value="1"/>
</dbReference>
<dbReference type="Gene3D" id="3.40.50.1240">
    <property type="entry name" value="Phosphoglycerate mutase-like"/>
    <property type="match status" value="1"/>
</dbReference>
<dbReference type="HAMAP" id="MF_01039">
    <property type="entry name" value="PGAM_GpmA"/>
    <property type="match status" value="1"/>
</dbReference>
<dbReference type="InterPro" id="IPR013078">
    <property type="entry name" value="His_Pase_superF_clade-1"/>
</dbReference>
<dbReference type="InterPro" id="IPR029033">
    <property type="entry name" value="His_PPase_superfam"/>
</dbReference>
<dbReference type="InterPro" id="IPR001345">
    <property type="entry name" value="PG/BPGM_mutase_AS"/>
</dbReference>
<dbReference type="InterPro" id="IPR005952">
    <property type="entry name" value="Phosphogly_mut1"/>
</dbReference>
<dbReference type="NCBIfam" id="TIGR01258">
    <property type="entry name" value="pgm_1"/>
    <property type="match status" value="1"/>
</dbReference>
<dbReference type="NCBIfam" id="NF002339">
    <property type="entry name" value="PRK01295.1"/>
    <property type="match status" value="1"/>
</dbReference>
<dbReference type="PANTHER" id="PTHR11931">
    <property type="entry name" value="PHOSPHOGLYCERATE MUTASE"/>
    <property type="match status" value="1"/>
</dbReference>
<dbReference type="Pfam" id="PF00300">
    <property type="entry name" value="His_Phos_1"/>
    <property type="match status" value="1"/>
</dbReference>
<dbReference type="SMART" id="SM00855">
    <property type="entry name" value="PGAM"/>
    <property type="match status" value="1"/>
</dbReference>
<dbReference type="SUPFAM" id="SSF53254">
    <property type="entry name" value="Phosphoglycerate mutase-like"/>
    <property type="match status" value="1"/>
</dbReference>
<dbReference type="PROSITE" id="PS00175">
    <property type="entry name" value="PG_MUTASE"/>
    <property type="match status" value="1"/>
</dbReference>
<feature type="chain" id="PRO_1000149497" description="2,3-bisphosphoglycerate-dependent phosphoglycerate mutase">
    <location>
        <begin position="1"/>
        <end position="206"/>
    </location>
</feature>
<feature type="active site" description="Tele-phosphohistidine intermediate" evidence="1">
    <location>
        <position position="10"/>
    </location>
</feature>
<feature type="active site" description="Proton donor/acceptor" evidence="1">
    <location>
        <position position="88"/>
    </location>
</feature>
<feature type="binding site" evidence="1">
    <location>
        <begin position="9"/>
        <end position="16"/>
    </location>
    <ligand>
        <name>substrate</name>
    </ligand>
</feature>
<feature type="binding site" evidence="1">
    <location>
        <begin position="22"/>
        <end position="23"/>
    </location>
    <ligand>
        <name>substrate</name>
    </ligand>
</feature>
<feature type="binding site" evidence="1">
    <location>
        <position position="61"/>
    </location>
    <ligand>
        <name>substrate</name>
    </ligand>
</feature>
<feature type="binding site" evidence="1">
    <location>
        <begin position="88"/>
        <end position="91"/>
    </location>
    <ligand>
        <name>substrate</name>
    </ligand>
</feature>
<feature type="binding site" evidence="1">
    <location>
        <position position="99"/>
    </location>
    <ligand>
        <name>substrate</name>
    </ligand>
</feature>
<feature type="binding site" evidence="1">
    <location>
        <begin position="115"/>
        <end position="116"/>
    </location>
    <ligand>
        <name>substrate</name>
    </ligand>
</feature>
<feature type="binding site" evidence="1">
    <location>
        <begin position="159"/>
        <end position="160"/>
    </location>
    <ligand>
        <name>substrate</name>
    </ligand>
</feature>
<feature type="site" description="Transition state stabilizer" evidence="1">
    <location>
        <position position="158"/>
    </location>
</feature>